<feature type="chain" id="PRO_1000077735" description="DNA repair protein RecO">
    <location>
        <begin position="1"/>
        <end position="227"/>
    </location>
</feature>
<organism>
    <name type="scientific">Pseudomonas putida (strain GB-1)</name>
    <dbReference type="NCBI Taxonomy" id="76869"/>
    <lineage>
        <taxon>Bacteria</taxon>
        <taxon>Pseudomonadati</taxon>
        <taxon>Pseudomonadota</taxon>
        <taxon>Gammaproteobacteria</taxon>
        <taxon>Pseudomonadales</taxon>
        <taxon>Pseudomonadaceae</taxon>
        <taxon>Pseudomonas</taxon>
    </lineage>
</organism>
<sequence>MDQPTPQPAYVLHSRAYKETSALVDFFTPQGRVRAVLRRARSKGGSLVRPFVPLEVELRGRGELKNVGGMDSAGTAAWLHGDALFSGLYLNELLMRLLPAEAPFPTLFEHYTLTLQALGAGRPLEPLLRSFEWRLLDELGYAFSLQQDVNDQPVAADGLYRLRVDAGLERVELAQPGLFRGTELLALAEANWEAPGALLAAKRLMRQALAVHLGAKPLVSRELFRKR</sequence>
<dbReference type="EMBL" id="CP000926">
    <property type="protein sequence ID" value="ABZ00261.1"/>
    <property type="molecule type" value="Genomic_DNA"/>
</dbReference>
<dbReference type="RefSeq" id="WP_012273925.1">
    <property type="nucleotide sequence ID" value="NC_010322.1"/>
</dbReference>
<dbReference type="SMR" id="B0KV25"/>
<dbReference type="KEGG" id="ppg:PputGB1_4372"/>
<dbReference type="eggNOG" id="COG1381">
    <property type="taxonomic scope" value="Bacteria"/>
</dbReference>
<dbReference type="HOGENOM" id="CLU_066645_1_0_6"/>
<dbReference type="Proteomes" id="UP000002157">
    <property type="component" value="Chromosome"/>
</dbReference>
<dbReference type="GO" id="GO:0043590">
    <property type="term" value="C:bacterial nucleoid"/>
    <property type="evidence" value="ECO:0007669"/>
    <property type="project" value="TreeGrafter"/>
</dbReference>
<dbReference type="GO" id="GO:0006310">
    <property type="term" value="P:DNA recombination"/>
    <property type="evidence" value="ECO:0007669"/>
    <property type="project" value="UniProtKB-UniRule"/>
</dbReference>
<dbReference type="GO" id="GO:0006302">
    <property type="term" value="P:double-strand break repair"/>
    <property type="evidence" value="ECO:0007669"/>
    <property type="project" value="TreeGrafter"/>
</dbReference>
<dbReference type="Gene3D" id="2.40.50.140">
    <property type="entry name" value="Nucleic acid-binding proteins"/>
    <property type="match status" value="1"/>
</dbReference>
<dbReference type="Gene3D" id="1.20.1440.120">
    <property type="entry name" value="Recombination protein O, C-terminal domain"/>
    <property type="match status" value="1"/>
</dbReference>
<dbReference type="HAMAP" id="MF_00201">
    <property type="entry name" value="RecO"/>
    <property type="match status" value="1"/>
</dbReference>
<dbReference type="InterPro" id="IPR037278">
    <property type="entry name" value="ARFGAP/RecO"/>
</dbReference>
<dbReference type="InterPro" id="IPR022572">
    <property type="entry name" value="DNA_rep/recomb_RecO_N"/>
</dbReference>
<dbReference type="InterPro" id="IPR012340">
    <property type="entry name" value="NA-bd_OB-fold"/>
</dbReference>
<dbReference type="InterPro" id="IPR003717">
    <property type="entry name" value="RecO"/>
</dbReference>
<dbReference type="InterPro" id="IPR042242">
    <property type="entry name" value="RecO_C"/>
</dbReference>
<dbReference type="NCBIfam" id="TIGR00613">
    <property type="entry name" value="reco"/>
    <property type="match status" value="1"/>
</dbReference>
<dbReference type="PANTHER" id="PTHR33991">
    <property type="entry name" value="DNA REPAIR PROTEIN RECO"/>
    <property type="match status" value="1"/>
</dbReference>
<dbReference type="PANTHER" id="PTHR33991:SF1">
    <property type="entry name" value="DNA REPAIR PROTEIN RECO"/>
    <property type="match status" value="1"/>
</dbReference>
<dbReference type="Pfam" id="PF02565">
    <property type="entry name" value="RecO_C"/>
    <property type="match status" value="1"/>
</dbReference>
<dbReference type="Pfam" id="PF11967">
    <property type="entry name" value="RecO_N"/>
    <property type="match status" value="1"/>
</dbReference>
<dbReference type="SUPFAM" id="SSF57863">
    <property type="entry name" value="ArfGap/RecO-like zinc finger"/>
    <property type="match status" value="1"/>
</dbReference>
<dbReference type="SUPFAM" id="SSF50249">
    <property type="entry name" value="Nucleic acid-binding proteins"/>
    <property type="match status" value="1"/>
</dbReference>
<proteinExistence type="inferred from homology"/>
<reference key="1">
    <citation type="submission" date="2008-01" db="EMBL/GenBank/DDBJ databases">
        <title>Complete sequence of Pseudomonas putida GB-1.</title>
        <authorList>
            <consortium name="US DOE Joint Genome Institute"/>
            <person name="Copeland A."/>
            <person name="Lucas S."/>
            <person name="Lapidus A."/>
            <person name="Barry K."/>
            <person name="Glavina del Rio T."/>
            <person name="Dalin E."/>
            <person name="Tice H."/>
            <person name="Pitluck S."/>
            <person name="Bruce D."/>
            <person name="Goodwin L."/>
            <person name="Chertkov O."/>
            <person name="Brettin T."/>
            <person name="Detter J.C."/>
            <person name="Han C."/>
            <person name="Kuske C.R."/>
            <person name="Schmutz J."/>
            <person name="Larimer F."/>
            <person name="Land M."/>
            <person name="Hauser L."/>
            <person name="Kyrpides N."/>
            <person name="Kim E."/>
            <person name="McCarthy J.K."/>
            <person name="Richardson P."/>
        </authorList>
    </citation>
    <scope>NUCLEOTIDE SEQUENCE [LARGE SCALE GENOMIC DNA]</scope>
    <source>
        <strain>GB-1</strain>
    </source>
</reference>
<evidence type="ECO:0000255" key="1">
    <source>
        <dbReference type="HAMAP-Rule" id="MF_00201"/>
    </source>
</evidence>
<name>RECO_PSEPG</name>
<comment type="function">
    <text evidence="1">Involved in DNA repair and RecF pathway recombination.</text>
</comment>
<comment type="similarity">
    <text evidence="1">Belongs to the RecO family.</text>
</comment>
<accession>B0KV25</accession>
<protein>
    <recommendedName>
        <fullName evidence="1">DNA repair protein RecO</fullName>
    </recommendedName>
    <alternativeName>
        <fullName evidence="1">Recombination protein O</fullName>
    </alternativeName>
</protein>
<keyword id="KW-0227">DNA damage</keyword>
<keyword id="KW-0233">DNA recombination</keyword>
<keyword id="KW-0234">DNA repair</keyword>
<gene>
    <name evidence="1" type="primary">recO</name>
    <name type="ordered locus">PputGB1_4372</name>
</gene>